<name>SLYX_STUS1</name>
<accession>A4VNB1</accession>
<dbReference type="EMBL" id="CP000304">
    <property type="protein sequence ID" value="ABP80462.1"/>
    <property type="molecule type" value="Genomic_DNA"/>
</dbReference>
<dbReference type="RefSeq" id="WP_011913919.1">
    <property type="nucleotide sequence ID" value="NC_009434.1"/>
</dbReference>
<dbReference type="SMR" id="A4VNB1"/>
<dbReference type="GeneID" id="66822137"/>
<dbReference type="KEGG" id="psa:PST_2816"/>
<dbReference type="eggNOG" id="COG2900">
    <property type="taxonomic scope" value="Bacteria"/>
</dbReference>
<dbReference type="HOGENOM" id="CLU_180796_4_1_6"/>
<dbReference type="Proteomes" id="UP000000233">
    <property type="component" value="Chromosome"/>
</dbReference>
<dbReference type="Gene3D" id="1.20.5.300">
    <property type="match status" value="1"/>
</dbReference>
<dbReference type="HAMAP" id="MF_00715">
    <property type="entry name" value="SlyX"/>
    <property type="match status" value="1"/>
</dbReference>
<dbReference type="InterPro" id="IPR007236">
    <property type="entry name" value="SlyX"/>
</dbReference>
<dbReference type="NCBIfam" id="NF001421">
    <property type="entry name" value="PRK00295.1"/>
    <property type="match status" value="1"/>
</dbReference>
<dbReference type="PANTHER" id="PTHR36508">
    <property type="entry name" value="PROTEIN SLYX"/>
    <property type="match status" value="1"/>
</dbReference>
<dbReference type="PANTHER" id="PTHR36508:SF1">
    <property type="entry name" value="PROTEIN SLYX"/>
    <property type="match status" value="1"/>
</dbReference>
<dbReference type="Pfam" id="PF04102">
    <property type="entry name" value="SlyX"/>
    <property type="match status" value="1"/>
</dbReference>
<reference key="1">
    <citation type="journal article" date="2008" name="Proc. Natl. Acad. Sci. U.S.A.">
        <title>Nitrogen fixation island and rhizosphere competence traits in the genome of root-associated Pseudomonas stutzeri A1501.</title>
        <authorList>
            <person name="Yan Y."/>
            <person name="Yang J."/>
            <person name="Dou Y."/>
            <person name="Chen M."/>
            <person name="Ping S."/>
            <person name="Peng J."/>
            <person name="Lu W."/>
            <person name="Zhang W."/>
            <person name="Yao Z."/>
            <person name="Li H."/>
            <person name="Liu W."/>
            <person name="He S."/>
            <person name="Geng L."/>
            <person name="Zhang X."/>
            <person name="Yang F."/>
            <person name="Yu H."/>
            <person name="Zhan Y."/>
            <person name="Li D."/>
            <person name="Lin Z."/>
            <person name="Wang Y."/>
            <person name="Elmerich C."/>
            <person name="Lin M."/>
            <person name="Jin Q."/>
        </authorList>
    </citation>
    <scope>NUCLEOTIDE SEQUENCE [LARGE SCALE GENOMIC DNA]</scope>
    <source>
        <strain>A1501</strain>
    </source>
</reference>
<comment type="similarity">
    <text evidence="1">Belongs to the SlyX family.</text>
</comment>
<keyword id="KW-1185">Reference proteome</keyword>
<sequence length="71" mass="8061">MIVDLESRVTDLETRLAFQDDTIQALNDVLVEQQRLVERLQLQLVALAKRQEEMQGSLGAADEDEAPPPHY</sequence>
<feature type="chain" id="PRO_1000195846" description="Protein SlyX homolog">
    <location>
        <begin position="1"/>
        <end position="71"/>
    </location>
</feature>
<proteinExistence type="inferred from homology"/>
<protein>
    <recommendedName>
        <fullName evidence="1">Protein SlyX homolog</fullName>
    </recommendedName>
</protein>
<organism>
    <name type="scientific">Stutzerimonas stutzeri (strain A1501)</name>
    <name type="common">Pseudomonas stutzeri</name>
    <dbReference type="NCBI Taxonomy" id="379731"/>
    <lineage>
        <taxon>Bacteria</taxon>
        <taxon>Pseudomonadati</taxon>
        <taxon>Pseudomonadota</taxon>
        <taxon>Gammaproteobacteria</taxon>
        <taxon>Pseudomonadales</taxon>
        <taxon>Pseudomonadaceae</taxon>
        <taxon>Stutzerimonas</taxon>
    </lineage>
</organism>
<evidence type="ECO:0000255" key="1">
    <source>
        <dbReference type="HAMAP-Rule" id="MF_00715"/>
    </source>
</evidence>
<gene>
    <name evidence="1" type="primary">slyX</name>
    <name type="ordered locus">PST_2816</name>
</gene>